<dbReference type="EC" id="4.6.1.-" evidence="4"/>
<dbReference type="SMR" id="P0C2K0"/>
<dbReference type="ArachnoServer" id="AS000136">
    <property type="toxin name" value="Sphingomyelinase D (LbSicTox-alphaIB1b) (N-terminal fragment)"/>
</dbReference>
<dbReference type="GO" id="GO:0005576">
    <property type="term" value="C:extracellular region"/>
    <property type="evidence" value="ECO:0007669"/>
    <property type="project" value="UniProtKB-SubCell"/>
</dbReference>
<dbReference type="GO" id="GO:0016829">
    <property type="term" value="F:lyase activity"/>
    <property type="evidence" value="ECO:0007669"/>
    <property type="project" value="UniProtKB-KW"/>
</dbReference>
<dbReference type="GO" id="GO:0046872">
    <property type="term" value="F:metal ion binding"/>
    <property type="evidence" value="ECO:0007669"/>
    <property type="project" value="UniProtKB-KW"/>
</dbReference>
<dbReference type="GO" id="GO:0008081">
    <property type="term" value="F:phosphoric diester hydrolase activity"/>
    <property type="evidence" value="ECO:0007669"/>
    <property type="project" value="InterPro"/>
</dbReference>
<dbReference type="GO" id="GO:0090729">
    <property type="term" value="F:toxin activity"/>
    <property type="evidence" value="ECO:0007669"/>
    <property type="project" value="UniProtKB-KW"/>
</dbReference>
<dbReference type="GO" id="GO:0031640">
    <property type="term" value="P:killing of cells of another organism"/>
    <property type="evidence" value="ECO:0007669"/>
    <property type="project" value="UniProtKB-KW"/>
</dbReference>
<dbReference type="GO" id="GO:0016042">
    <property type="term" value="P:lipid catabolic process"/>
    <property type="evidence" value="ECO:0007669"/>
    <property type="project" value="UniProtKB-KW"/>
</dbReference>
<dbReference type="Gene3D" id="3.20.20.190">
    <property type="entry name" value="Phosphatidylinositol (PI) phosphodiesterase"/>
    <property type="match status" value="1"/>
</dbReference>
<dbReference type="InterPro" id="IPR017946">
    <property type="entry name" value="PLC-like_Pdiesterase_TIM-brl"/>
</dbReference>
<keyword id="KW-0204">Cytolysis</keyword>
<keyword id="KW-1061">Dermonecrotic toxin</keyword>
<keyword id="KW-0903">Direct protein sequencing</keyword>
<keyword id="KW-1015">Disulfide bond</keyword>
<keyword id="KW-0354">Hemolysis</keyword>
<keyword id="KW-0442">Lipid degradation</keyword>
<keyword id="KW-0443">Lipid metabolism</keyword>
<keyword id="KW-0456">Lyase</keyword>
<keyword id="KW-0460">Magnesium</keyword>
<keyword id="KW-0479">Metal-binding</keyword>
<keyword id="KW-0964">Secreted</keyword>
<keyword id="KW-0800">Toxin</keyword>
<feature type="chain" id="PRO_0000279555" description="Dermonecrotic toxin LbSicTox-alphaIB1b">
    <location>
        <begin position="1"/>
        <end position="33" status="greater than"/>
    </location>
</feature>
<feature type="active site" evidence="5">
    <location>
        <position position="11"/>
    </location>
</feature>
<feature type="binding site" evidence="5">
    <location>
        <position position="31"/>
    </location>
    <ligand>
        <name>Mg(2+)</name>
        <dbReference type="ChEBI" id="CHEBI:18420"/>
    </ligand>
</feature>
<feature type="binding site" evidence="5">
    <location>
        <position position="33"/>
    </location>
    <ligand>
        <name>Mg(2+)</name>
        <dbReference type="ChEBI" id="CHEBI:18420"/>
    </ligand>
</feature>
<feature type="non-terminal residue">
    <location>
        <position position="33"/>
    </location>
</feature>
<accession>P0C2K0</accession>
<name>A1KB_LOXBO</name>
<reference key="1">
    <citation type="journal article" date="2004" name="Toxicon">
        <title>Genetic and enzymatic characterization of sphingomyelinase D isoforms from the North American fiddleback spiders Loxosceles boneti and Loxosceles reclusa.</title>
        <authorList>
            <person name="Ramos-Cerrillo B."/>
            <person name="Olvera A."/>
            <person name="Odell G.V."/>
            <person name="Zamudio F."/>
            <person name="Paniagua-Solis J."/>
            <person name="Alagon A."/>
            <person name="Stock R.P."/>
        </authorList>
    </citation>
    <scope>PROTEIN SEQUENCE</scope>
    <scope>FUNCTION</scope>
    <scope>SUBCELLULAR LOCATION</scope>
    <scope>CATALYTIC ACTIVITY</scope>
    <source>
        <tissue>Venom</tissue>
    </source>
</reference>
<evidence type="ECO:0000250" key="1">
    <source>
        <dbReference type="UniProtKB" id="A0A0D4WTV1"/>
    </source>
</evidence>
<evidence type="ECO:0000250" key="2">
    <source>
        <dbReference type="UniProtKB" id="A0A0D4WV12"/>
    </source>
</evidence>
<evidence type="ECO:0000250" key="3">
    <source>
        <dbReference type="UniProtKB" id="P0CE80"/>
    </source>
</evidence>
<evidence type="ECO:0000250" key="4">
    <source>
        <dbReference type="UniProtKB" id="Q4ZFU2"/>
    </source>
</evidence>
<evidence type="ECO:0000250" key="5">
    <source>
        <dbReference type="UniProtKB" id="Q8I914"/>
    </source>
</evidence>
<evidence type="ECO:0000269" key="6">
    <source>
    </source>
</evidence>
<evidence type="ECO:0000303" key="7">
    <source>
    </source>
</evidence>
<evidence type="ECO:0000305" key="8"/>
<evidence type="ECO:0000305" key="9">
    <source>
    </source>
</evidence>
<sequence>ANKRPVWIMAHMVNAVAQIDEFVNLGANSIETD</sequence>
<comment type="function">
    <text evidence="1 3 6">Dermonecrotic toxins cleave the phosphodiester linkage between the phosphate and headgroup of certain phospholipids (sphingolipid and lysolipid substrates), forming an alcohol (often choline) and a cyclic phosphate (By similarity). This toxin acts on sphingomyelin (SM) with high activity (9.5 U/mg) (PubMed:15450925). It may also act on ceramide phosphoethanolamine (CPE), lysophosphatidylcholine (LPC) and lysophosphatidylethanolamine (LPE), but not on lysophosphatidylserine (LPS), and lysophosphatidylglycerol (LPG) (By similarity). It acts by transphosphatidylation, releasing exclusively cyclic phosphate products as second products (By similarity). Induces dermonecrosis, hemolysis, increased vascular permeability, edema, inflammatory response, and platelet aggregation (By similarity).</text>
</comment>
<comment type="catalytic activity">
    <reaction evidence="9">
        <text>an N-(acyl)-sphingosylphosphocholine = an N-(acyl)-sphingosyl-1,3-cyclic phosphate + choline</text>
        <dbReference type="Rhea" id="RHEA:60652"/>
        <dbReference type="ChEBI" id="CHEBI:15354"/>
        <dbReference type="ChEBI" id="CHEBI:64583"/>
        <dbReference type="ChEBI" id="CHEBI:143892"/>
    </reaction>
</comment>
<comment type="catalytic activity">
    <reaction evidence="1">
        <text>an N-(acyl)-sphingosylphosphoethanolamine = an N-(acyl)-sphingosyl-1,3-cyclic phosphate + ethanolamine</text>
        <dbReference type="Rhea" id="RHEA:60648"/>
        <dbReference type="ChEBI" id="CHEBI:57603"/>
        <dbReference type="ChEBI" id="CHEBI:143891"/>
        <dbReference type="ChEBI" id="CHEBI:143892"/>
    </reaction>
</comment>
<comment type="catalytic activity">
    <reaction evidence="1">
        <text>a 1-acyl-sn-glycero-3-phosphocholine = a 1-acyl-sn-glycero-2,3-cyclic phosphate + choline</text>
        <dbReference type="Rhea" id="RHEA:60700"/>
        <dbReference type="ChEBI" id="CHEBI:15354"/>
        <dbReference type="ChEBI" id="CHEBI:58168"/>
        <dbReference type="ChEBI" id="CHEBI:143947"/>
    </reaction>
</comment>
<comment type="catalytic activity">
    <reaction evidence="1">
        <text>a 1-acyl-sn-glycero-3-phosphoethanolamine = a 1-acyl-sn-glycero-2,3-cyclic phosphate + ethanolamine</text>
        <dbReference type="Rhea" id="RHEA:60704"/>
        <dbReference type="ChEBI" id="CHEBI:57603"/>
        <dbReference type="ChEBI" id="CHEBI:64381"/>
        <dbReference type="ChEBI" id="CHEBI:143947"/>
    </reaction>
</comment>
<comment type="cofactor">
    <cofactor evidence="5">
        <name>Mg(2+)</name>
        <dbReference type="ChEBI" id="CHEBI:18420"/>
    </cofactor>
    <text evidence="5">Binds 1 Mg(2+) ion per subunit.</text>
</comment>
<comment type="subcellular location">
    <subcellularLocation>
        <location evidence="6">Secreted</location>
    </subcellularLocation>
</comment>
<comment type="tissue specificity">
    <text evidence="9">Expressed by the venom gland.</text>
</comment>
<comment type="PTM">
    <text evidence="3">Contains 2 disulfide bonds.</text>
</comment>
<comment type="similarity">
    <text evidence="8">Belongs to the arthropod phospholipase D family. Class II subfamily.</text>
</comment>
<comment type="caution">
    <text evidence="1 2 4">The most common activity assay for dermonecrotic toxins detects enzymatic activity by monitoring choline release from substrate. Liberation of choline from sphingomyelin (SM) or lysophosphatidylcholine (LPC) is commonly assumed to result from substrate hydrolysis, giving either ceramide-1-phosphate (C1P) or lysophosphatidic acid (LPA), respectively, as a second product. However, two studies from Lajoie and colleagues (2013 and 2015) report the observation of exclusive formation of cyclic phosphate products as second products, resulting from intramolecular transphosphatidylation. Cyclic phosphates have vastly different biological properties from their monoester counterparts, and they may be relevant to the pathology of brown spider envenomation.</text>
</comment>
<protein>
    <recommendedName>
        <fullName>Dermonecrotic toxin LbSicTox-alphaIB1b</fullName>
        <ecNumber evidence="4">4.6.1.-</ecNumber>
    </recommendedName>
    <alternativeName>
        <fullName evidence="7">Lb2</fullName>
    </alternativeName>
    <alternativeName>
        <fullName>Phospholipase D</fullName>
        <shortName>PLD</shortName>
    </alternativeName>
    <alternativeName>
        <fullName>Sphingomyelin phosphodiesterase D 2</fullName>
        <shortName>SMD 2</shortName>
        <shortName>SMase D 2</shortName>
        <shortName>Sphingomyelinase D 2</shortName>
    </alternativeName>
</protein>
<organism>
    <name type="scientific">Loxosceles boneti</name>
    <name type="common">North American fiddleback spider</name>
    <dbReference type="NCBI Taxonomy" id="283164"/>
    <lineage>
        <taxon>Eukaryota</taxon>
        <taxon>Metazoa</taxon>
        <taxon>Ecdysozoa</taxon>
        <taxon>Arthropoda</taxon>
        <taxon>Chelicerata</taxon>
        <taxon>Arachnida</taxon>
        <taxon>Araneae</taxon>
        <taxon>Araneomorphae</taxon>
        <taxon>Haplogynae</taxon>
        <taxon>Scytodoidea</taxon>
        <taxon>Sicariidae</taxon>
        <taxon>Loxosceles</taxon>
    </lineage>
</organism>
<proteinExistence type="evidence at protein level"/>